<name>RS10_ALTMD</name>
<proteinExistence type="inferred from homology"/>
<accession>B4RZN1</accession>
<accession>F2G5N3</accession>
<keyword id="KW-0687">Ribonucleoprotein</keyword>
<keyword id="KW-0689">Ribosomal protein</keyword>
<dbReference type="EMBL" id="CP001103">
    <property type="protein sequence ID" value="AEA96600.1"/>
    <property type="molecule type" value="Genomic_DNA"/>
</dbReference>
<dbReference type="RefSeq" id="WP_010179497.1">
    <property type="nucleotide sequence ID" value="NC_011138.3"/>
</dbReference>
<dbReference type="SMR" id="B4RZN1"/>
<dbReference type="GeneID" id="56340940"/>
<dbReference type="KEGG" id="amc:MADE_1002255"/>
<dbReference type="HOGENOM" id="CLU_122625_1_3_6"/>
<dbReference type="Proteomes" id="UP000001870">
    <property type="component" value="Chromosome"/>
</dbReference>
<dbReference type="GO" id="GO:1990904">
    <property type="term" value="C:ribonucleoprotein complex"/>
    <property type="evidence" value="ECO:0007669"/>
    <property type="project" value="UniProtKB-KW"/>
</dbReference>
<dbReference type="GO" id="GO:0005840">
    <property type="term" value="C:ribosome"/>
    <property type="evidence" value="ECO:0007669"/>
    <property type="project" value="UniProtKB-KW"/>
</dbReference>
<dbReference type="GO" id="GO:0003735">
    <property type="term" value="F:structural constituent of ribosome"/>
    <property type="evidence" value="ECO:0007669"/>
    <property type="project" value="InterPro"/>
</dbReference>
<dbReference type="GO" id="GO:0000049">
    <property type="term" value="F:tRNA binding"/>
    <property type="evidence" value="ECO:0007669"/>
    <property type="project" value="UniProtKB-UniRule"/>
</dbReference>
<dbReference type="GO" id="GO:0006412">
    <property type="term" value="P:translation"/>
    <property type="evidence" value="ECO:0007669"/>
    <property type="project" value="UniProtKB-UniRule"/>
</dbReference>
<dbReference type="FunFam" id="3.30.70.600:FF:000001">
    <property type="entry name" value="30S ribosomal protein S10"/>
    <property type="match status" value="1"/>
</dbReference>
<dbReference type="Gene3D" id="3.30.70.600">
    <property type="entry name" value="Ribosomal protein S10 domain"/>
    <property type="match status" value="1"/>
</dbReference>
<dbReference type="HAMAP" id="MF_00508">
    <property type="entry name" value="Ribosomal_uS10"/>
    <property type="match status" value="1"/>
</dbReference>
<dbReference type="InterPro" id="IPR001848">
    <property type="entry name" value="Ribosomal_uS10"/>
</dbReference>
<dbReference type="InterPro" id="IPR018268">
    <property type="entry name" value="Ribosomal_uS10_CS"/>
</dbReference>
<dbReference type="InterPro" id="IPR027486">
    <property type="entry name" value="Ribosomal_uS10_dom"/>
</dbReference>
<dbReference type="InterPro" id="IPR036838">
    <property type="entry name" value="Ribosomal_uS10_dom_sf"/>
</dbReference>
<dbReference type="NCBIfam" id="NF001861">
    <property type="entry name" value="PRK00596.1"/>
    <property type="match status" value="1"/>
</dbReference>
<dbReference type="NCBIfam" id="TIGR01049">
    <property type="entry name" value="rpsJ_bact"/>
    <property type="match status" value="1"/>
</dbReference>
<dbReference type="PANTHER" id="PTHR11700">
    <property type="entry name" value="30S RIBOSOMAL PROTEIN S10 FAMILY MEMBER"/>
    <property type="match status" value="1"/>
</dbReference>
<dbReference type="Pfam" id="PF00338">
    <property type="entry name" value="Ribosomal_S10"/>
    <property type="match status" value="1"/>
</dbReference>
<dbReference type="PRINTS" id="PR00971">
    <property type="entry name" value="RIBOSOMALS10"/>
</dbReference>
<dbReference type="SMART" id="SM01403">
    <property type="entry name" value="Ribosomal_S10"/>
    <property type="match status" value="1"/>
</dbReference>
<dbReference type="SUPFAM" id="SSF54999">
    <property type="entry name" value="Ribosomal protein S10"/>
    <property type="match status" value="1"/>
</dbReference>
<dbReference type="PROSITE" id="PS00361">
    <property type="entry name" value="RIBOSOMAL_S10"/>
    <property type="match status" value="1"/>
</dbReference>
<sequence>MPNQRIRIRLKAFDHKLIDQSTAEIVETAKRTGAQVSGPIPLPTRKERYTVLISPHVNKDARDQYEIRTHKRLVDIIEPTDKTVDALMRLDLAAGVDVQISLG</sequence>
<organism>
    <name type="scientific">Alteromonas mediterranea (strain DSM 17117 / CIP 110805 / LMG 28347 / Deep ecotype)</name>
    <dbReference type="NCBI Taxonomy" id="1774373"/>
    <lineage>
        <taxon>Bacteria</taxon>
        <taxon>Pseudomonadati</taxon>
        <taxon>Pseudomonadota</taxon>
        <taxon>Gammaproteobacteria</taxon>
        <taxon>Alteromonadales</taxon>
        <taxon>Alteromonadaceae</taxon>
        <taxon>Alteromonas/Salinimonas group</taxon>
        <taxon>Alteromonas</taxon>
    </lineage>
</organism>
<gene>
    <name evidence="1" type="primary">rpsJ</name>
    <name type="ordered locus">MADE_1002255</name>
</gene>
<evidence type="ECO:0000255" key="1">
    <source>
        <dbReference type="HAMAP-Rule" id="MF_00508"/>
    </source>
</evidence>
<evidence type="ECO:0000305" key="2"/>
<feature type="chain" id="PRO_1000127073" description="Small ribosomal subunit protein uS10">
    <location>
        <begin position="1"/>
        <end position="103"/>
    </location>
</feature>
<comment type="function">
    <text evidence="1">Involved in the binding of tRNA to the ribosomes.</text>
</comment>
<comment type="subunit">
    <text evidence="1">Part of the 30S ribosomal subunit.</text>
</comment>
<comment type="similarity">
    <text evidence="1">Belongs to the universal ribosomal protein uS10 family.</text>
</comment>
<reference key="1">
    <citation type="journal article" date="2008" name="ISME J.">
        <title>Comparative genomics of two ecotypes of the marine planktonic copiotroph Alteromonas macleodii suggests alternative lifestyles associated with different kinds of particulate organic matter.</title>
        <authorList>
            <person name="Ivars-Martinez E."/>
            <person name="Martin-Cuadrado A.-B."/>
            <person name="D'Auria G."/>
            <person name="Mira A."/>
            <person name="Ferriera S."/>
            <person name="Johnson J."/>
            <person name="Friedman R."/>
            <person name="Rodriguez-Valera F."/>
        </authorList>
    </citation>
    <scope>NUCLEOTIDE SEQUENCE [LARGE SCALE GENOMIC DNA]</scope>
    <source>
        <strain>DSM 17117 / CIP 110805 / LMG 28347 / Deep ecotype</strain>
    </source>
</reference>
<protein>
    <recommendedName>
        <fullName evidence="1">Small ribosomal subunit protein uS10</fullName>
    </recommendedName>
    <alternativeName>
        <fullName evidence="2">30S ribosomal protein S10</fullName>
    </alternativeName>
</protein>